<evidence type="ECO:0000250" key="1">
    <source>
        <dbReference type="UniProtKB" id="O51934"/>
    </source>
</evidence>
<evidence type="ECO:0000250" key="2">
    <source>
        <dbReference type="UniProtKB" id="Q08582"/>
    </source>
</evidence>
<evidence type="ECO:0000250" key="3">
    <source>
        <dbReference type="UniProtKB" id="Q97ZZ8"/>
    </source>
</evidence>
<evidence type="ECO:0000255" key="4">
    <source>
        <dbReference type="PROSITE-ProRule" id="PRU01383"/>
    </source>
</evidence>
<evidence type="ECO:0000269" key="5">
    <source>
    </source>
</evidence>
<evidence type="ECO:0000269" key="6">
    <source>
    </source>
</evidence>
<evidence type="ECO:0000269" key="7">
    <source>
    </source>
</evidence>
<evidence type="ECO:0000303" key="8">
    <source>
    </source>
</evidence>
<evidence type="ECO:0000303" key="9">
    <source>
    </source>
</evidence>
<evidence type="ECO:0000305" key="10"/>
<evidence type="ECO:0000305" key="11">
    <source>
    </source>
</evidence>
<evidence type="ECO:0000305" key="12">
    <source>
    </source>
</evidence>
<evidence type="ECO:0000305" key="13">
    <source>
    </source>
</evidence>
<evidence type="ECO:0000312" key="14">
    <source>
        <dbReference type="EMBL" id="AAA96962.1"/>
    </source>
</evidence>
<evidence type="ECO:0000312" key="15">
    <source>
        <dbReference type="EMBL" id="AAM01506.1"/>
    </source>
</evidence>
<sequence>MNATLRIRNRPVAESTYTSLRGAKAEVVRVEREEREIHPKPPFETGTMLQAATRRLRLSSERVMQLAQDLFEGGLITYHRTDSTRVSEEGKRVARDYIRANFDPEDYNPRTWEPEAEHVEGAHECIRPTRPADAEELRTMVREGAIQTTVTLTSHHLRLYDLVFRRFVASQMKPAKVLYQEAVLEVEVKGVPVAELELSGVLEIVEPGFTKVLTEYDLPAYGIRETPELEEGDRLEIGDVEVLERHEEYPYDQSELVEDMRERGLGRPSTYAQIVEKLFRRGYVYEVPQRRWIFPTTRGEAVYEYLSTHYERFVSEETTRDLEERMDAVALGKAEYQEEMEKLYLELERVVEMPDPEP</sequence>
<reference evidence="14" key="1">
    <citation type="journal article" date="1996" name="Proc. Natl. Acad. Sci. U.S.A.">
        <title>A two-subunit type I DNA topoisomerase (reverse gyrase) from an extreme hyperthermophile.</title>
        <authorList>
            <person name="Krah R."/>
            <person name="Kozyavkin S.A."/>
            <person name="Slesarev A.I."/>
            <person name="Gellert M."/>
        </authorList>
    </citation>
    <scope>NUCLEOTIDE SEQUENCE [GENOMIC DNA]</scope>
    <scope>PROTEIN SEQUENCE OF 1-15</scope>
    <scope>IDENTIFICATION OF START CODON</scope>
    <scope>PROBABLE ACTIVE SITE</scope>
</reference>
<reference evidence="15" key="2">
    <citation type="journal article" date="2002" name="Proc. Natl. Acad. Sci. U.S.A.">
        <title>The complete genome of hyperthermophile Methanopyrus kandleri AV19 and monophyly of archaeal methanogens.</title>
        <authorList>
            <person name="Slesarev A.I."/>
            <person name="Mezhevaya K.V."/>
            <person name="Makarova K.S."/>
            <person name="Polushin N.N."/>
            <person name="Shcherbinina O.V."/>
            <person name="Shakhova V.V."/>
            <person name="Belova G.I."/>
            <person name="Aravind L."/>
            <person name="Natale D.A."/>
            <person name="Rogozin I.B."/>
            <person name="Tatusov R.L."/>
            <person name="Wolf Y.I."/>
            <person name="Stetter K.O."/>
            <person name="Malykh A.G."/>
            <person name="Koonin E.V."/>
            <person name="Kozyavkin S.A."/>
        </authorList>
    </citation>
    <scope>NUCLEOTIDE SEQUENCE [LARGE SCALE GENOMIC DNA]</scope>
    <source>
        <strain>AV19 / DSM 6324 / JCM 9639 / NBRC 100938</strain>
    </source>
</reference>
<reference key="3">
    <citation type="journal article" date="1994" name="J. Biol. Chem.">
        <title>A reverse gyrase with an unusual structure. A type I DNA topoisomerase from the hyperthermophile Methanopyrus kandleri is a two-subunit protein.</title>
        <authorList>
            <person name="Kozyavkin S.A."/>
            <person name="Krah R."/>
            <person name="Gellert M."/>
            <person name="Stetter K.O."/>
            <person name="Lake J.A."/>
            <person name="Slesarev A.I."/>
        </authorList>
    </citation>
    <scope>FUNCTION</scope>
    <scope>CATALYTIC ACTIVITY</scope>
    <scope>REACTION MECHANISM</scope>
    <scope>SUBUNIT</scope>
    <scope>PROTEIN ABUNDANCE</scope>
    <scope>DNA-BINDING</scope>
    <source>
        <strain>AV19 / DSM 6324 / JCM 9639 / NBRC 100938</strain>
    </source>
</reference>
<reference key="4">
    <citation type="journal article" date="1997" name="J. Biol. Chem.">
        <title>Reverse gyrase from Methanopyrus kandleri. Reconstitution of an active extremozyme from its two recombinant subunits.</title>
        <authorList>
            <person name="Krah R."/>
            <person name="O'Dea M.H."/>
            <person name="Gellert M."/>
        </authorList>
    </citation>
    <scope>RECONSTITUTION OF ACTIVE ENZYME</scope>
    <scope>FUNCTION</scope>
    <scope>CATALYTIC ACTIVITY</scope>
    <scope>COFACTOR</scope>
    <scope>SUBUNIT</scope>
</reference>
<organism>
    <name type="scientific">Methanopyrus kandleri (strain AV19 / DSM 6324 / JCM 9639 / NBRC 100938)</name>
    <dbReference type="NCBI Taxonomy" id="190192"/>
    <lineage>
        <taxon>Archaea</taxon>
        <taxon>Methanobacteriati</taxon>
        <taxon>Methanobacteriota</taxon>
        <taxon>Methanomada group</taxon>
        <taxon>Methanopyri</taxon>
        <taxon>Methanopyrales</taxon>
        <taxon>Methanopyraceae</taxon>
        <taxon>Methanopyrus</taxon>
    </lineage>
</organism>
<feature type="chain" id="PRO_0000459351" description="Reverse gyrase subunit A">
    <location>
        <begin position="1"/>
        <end position="358"/>
    </location>
</feature>
<feature type="domain" description="Topo IA-type catalytic" evidence="4">
    <location>
        <begin position="1"/>
        <end position="351"/>
    </location>
</feature>
<feature type="active site" description="O-(5'-phospho-DNA)-tyrosine intermediate" evidence="4 12">
    <location>
        <position position="78"/>
    </location>
</feature>
<feature type="sequence conflict" description="In Ref. 1; AAA96962." evidence="10" ref="1">
    <original>A</original>
    <variation>R</variation>
    <location>
        <position position="94"/>
    </location>
</feature>
<feature type="sequence conflict" description="In Ref. 1; AAA96962." evidence="10" ref="1">
    <original>D</original>
    <variation>A</variation>
    <location>
        <position position="239"/>
    </location>
</feature>
<protein>
    <recommendedName>
        <fullName evidence="8">Reverse gyrase subunit A</fullName>
        <ecNumber evidence="5 7">5.6.2.-</ecNumber>
    </recommendedName>
    <alternativeName>
        <fullName evidence="12">Topoisomerase-like subunit of reverse gyrase</fullName>
    </alternativeName>
</protein>
<gene>
    <name evidence="9" type="primary">rgyA</name>
    <name type="ordered locus">MK0289</name>
</gene>
<dbReference type="EC" id="5.6.2.-" evidence="5 7"/>
<dbReference type="EMBL" id="U41058">
    <property type="protein sequence ID" value="AAA96962.1"/>
    <property type="molecule type" value="Genomic_DNA"/>
</dbReference>
<dbReference type="EMBL" id="AE009439">
    <property type="protein sequence ID" value="AAM01506.1"/>
    <property type="molecule type" value="Genomic_DNA"/>
</dbReference>
<dbReference type="RefSeq" id="WP_011018661.1">
    <property type="nucleotide sequence ID" value="NC_003551.1"/>
</dbReference>
<dbReference type="SMR" id="Q8TYK7"/>
<dbReference type="STRING" id="190192.MK0289"/>
<dbReference type="PaxDb" id="190192-MK0289"/>
<dbReference type="EnsemblBacteria" id="AAM01506">
    <property type="protein sequence ID" value="AAM01506"/>
    <property type="gene ID" value="MK0289"/>
</dbReference>
<dbReference type="GeneID" id="1477592"/>
<dbReference type="KEGG" id="mka:MK0289"/>
<dbReference type="PATRIC" id="fig|190192.8.peg.293"/>
<dbReference type="HOGENOM" id="CLU_772961_0_0_2"/>
<dbReference type="InParanoid" id="Q8TYK7"/>
<dbReference type="OrthoDB" id="30963at2157"/>
<dbReference type="Proteomes" id="UP000001826">
    <property type="component" value="Chromosome"/>
</dbReference>
<dbReference type="GO" id="GO:0005737">
    <property type="term" value="C:cytoplasm"/>
    <property type="evidence" value="ECO:0007669"/>
    <property type="project" value="UniProtKB-SubCell"/>
</dbReference>
<dbReference type="GO" id="GO:0003677">
    <property type="term" value="F:DNA binding"/>
    <property type="evidence" value="ECO:0007669"/>
    <property type="project" value="UniProtKB-KW"/>
</dbReference>
<dbReference type="GO" id="GO:0003918">
    <property type="term" value="F:DNA topoisomerase type II (double strand cut, ATP-hydrolyzing) activity"/>
    <property type="evidence" value="ECO:0007669"/>
    <property type="project" value="UniProtKB-EC"/>
</dbReference>
<dbReference type="GO" id="GO:0160097">
    <property type="term" value="F:reverse gyrase activity"/>
    <property type="evidence" value="ECO:0000314"/>
    <property type="project" value="UniProtKB"/>
</dbReference>
<dbReference type="GO" id="GO:0006265">
    <property type="term" value="P:DNA topological change"/>
    <property type="evidence" value="ECO:0000314"/>
    <property type="project" value="UniProtKB"/>
</dbReference>
<dbReference type="CDD" id="cd00186">
    <property type="entry name" value="TOP1Ac"/>
    <property type="match status" value="1"/>
</dbReference>
<dbReference type="Gene3D" id="2.60.510.20">
    <property type="match status" value="1"/>
</dbReference>
<dbReference type="Gene3D" id="1.10.460.10">
    <property type="entry name" value="Topoisomerase I, domain 2"/>
    <property type="match status" value="1"/>
</dbReference>
<dbReference type="Gene3D" id="1.10.290.10">
    <property type="entry name" value="Topoisomerase I, domain 4"/>
    <property type="match status" value="1"/>
</dbReference>
<dbReference type="InterPro" id="IPR005736">
    <property type="entry name" value="Reverse_gyrase"/>
</dbReference>
<dbReference type="InterPro" id="IPR013497">
    <property type="entry name" value="Topo_IA_cen"/>
</dbReference>
<dbReference type="InterPro" id="IPR013824">
    <property type="entry name" value="Topo_IA_cen_sub1"/>
</dbReference>
<dbReference type="InterPro" id="IPR013826">
    <property type="entry name" value="Topo_IA_cen_sub3"/>
</dbReference>
<dbReference type="InterPro" id="IPR023405">
    <property type="entry name" value="Topo_IA_core_domain"/>
</dbReference>
<dbReference type="InterPro" id="IPR003602">
    <property type="entry name" value="Topo_IA_DNA-bd_dom"/>
</dbReference>
<dbReference type="PANTHER" id="PTHR43505">
    <property type="entry name" value="REVERSE GYRASE"/>
    <property type="match status" value="1"/>
</dbReference>
<dbReference type="PANTHER" id="PTHR43505:SF1">
    <property type="entry name" value="REVERSE GYRASE"/>
    <property type="match status" value="1"/>
</dbReference>
<dbReference type="Pfam" id="PF01131">
    <property type="entry name" value="Topoisom_bac"/>
    <property type="match status" value="1"/>
</dbReference>
<dbReference type="PRINTS" id="PR00417">
    <property type="entry name" value="PRTPISMRASEI"/>
</dbReference>
<dbReference type="SMART" id="SM00437">
    <property type="entry name" value="TOP1Ac"/>
    <property type="match status" value="1"/>
</dbReference>
<dbReference type="SUPFAM" id="SSF56712">
    <property type="entry name" value="Prokaryotic type I DNA topoisomerase"/>
    <property type="match status" value="1"/>
</dbReference>
<dbReference type="PROSITE" id="PS52039">
    <property type="entry name" value="TOPO_IA_2"/>
    <property type="match status" value="1"/>
</dbReference>
<accession>Q8TYK7</accession>
<accession>Q49599</accession>
<comment type="function">
    <text evidence="1 2 5">Modifies the topological state of DNA by introducing positive supercoils in an ATP-dependent process; dATP also allows positive supercoiling (PubMed:8157633). Increases the linking number in steps of +1 (PubMed:8157633). Only this subunit binds DNA, in isolation it does not hydrolyze ATP (PubMed:11930014). Hydrolyzes ATP only in the presence of DNA (PubMed:8157633). Transiently cleaves a single DNA strand and remains covalently bound to the 5' DNA end probably through a tyrosine residue. It changes linking number in steps of one, and nicks DNA preferentially at 5'-CNNN | 3'-sites with a strong preference for 4 pyrimidine residues (PubMed:8157633). There are about 1000 heterodimers per cell (PubMed:8157633). May be involved in rewinding the DNA strands in the regions of the chromosome that have opened up to allow transcription or replication (By similarity).</text>
</comment>
<comment type="function">
    <text evidence="7">Reverse gyrase activity is reconstituted after incubation at 80 degrees Celsius for 5 minutes, positive supercoiling requires ATP and Mg(2+). In the presence of ATP it binds and nicks substrate but does not make closed product.</text>
</comment>
<comment type="cofactor">
    <cofactor evidence="7">
        <name>Mg(2+)</name>
        <dbReference type="ChEBI" id="CHEBI:18420"/>
    </cofactor>
</comment>
<comment type="subunit">
    <text evidence="5 6 7">Heterodimer of an RgyrA and RgyrB subunit (PubMed:8157633, PubMed:9153263). The topoisomerase domain is shared between the two subunits (PubMed:8552584).</text>
</comment>
<comment type="subcellular location">
    <subcellularLocation>
        <location evidence="3">Cytoplasm</location>
    </subcellularLocation>
</comment>
<comment type="domain">
    <text evidence="11 13">Introduction of positive supercoils requires the cooperation of both the helicase-like and topoisomerase domains of the 2 subunits. The helicase-like domain probably does not directly unwind DNA, but more likely acts by driving ATP-dependent conformational changes within the whole enzyme. A beta hairpin in the 'latch' region of the N-terminal domain plays a regulatory role in the enzyme, repressing topoisomerase activity in the absence of ATP and preventing the enzyme from acting as an ATP-independent relaxing enzyme; it also helps to coordinate nucleotide hydrolysis by the ATPase domain with the supercoiling activity of the topoisomerase domain (PubMed:8157633, PubMed:9153263).</text>
</comment>
<comment type="miscellaneous">
    <text evidence="6">Starts on a TTG codon.</text>
</comment>
<comment type="miscellaneous">
    <text evidence="10">This enzyme is the only unique feature of hyperthermophilic bacteria/archaea known and seems to be essential for adaptation to life at high temperatures. It may play a role in stabilization of DNA at high temperatures.</text>
</comment>
<comment type="similarity">
    <text evidence="4 11">Belongs to the type IA topoisomerase family.</text>
</comment>
<proteinExistence type="evidence at protein level"/>
<name>RGYRA_METKA</name>
<keyword id="KW-0963">Cytoplasm</keyword>
<keyword id="KW-0903">Direct protein sequencing</keyword>
<keyword id="KW-0238">DNA-binding</keyword>
<keyword id="KW-0413">Isomerase</keyword>
<keyword id="KW-1185">Reference proteome</keyword>
<keyword id="KW-0799">Topoisomerase</keyword>